<evidence type="ECO:0000255" key="1">
    <source>
        <dbReference type="HAMAP-Rule" id="MF_00580"/>
    </source>
</evidence>
<comment type="function">
    <text evidence="1">Together with the chaperonin GroEL, plays an essential role in assisting protein folding. The GroEL-GroES system forms a nano-cage that allows encapsulation of the non-native substrate proteins and provides a physical environment optimized to promote and accelerate protein folding. GroES binds to the apical surface of the GroEL ring, thereby capping the opening of the GroEL channel.</text>
</comment>
<comment type="subunit">
    <text evidence="1">Heptamer of 7 subunits arranged in a ring. Interacts with the chaperonin GroEL.</text>
</comment>
<comment type="subcellular location">
    <subcellularLocation>
        <location evidence="1">Cytoplasm</location>
    </subcellularLocation>
</comment>
<comment type="similarity">
    <text evidence="1">Belongs to the GroES chaperonin family.</text>
</comment>
<proteinExistence type="inferred from homology"/>
<gene>
    <name evidence="1" type="primary">groES</name>
    <name evidence="1" type="synonym">groS</name>
    <name type="ordered locus">LCA_0358</name>
</gene>
<keyword id="KW-0143">Chaperone</keyword>
<keyword id="KW-0963">Cytoplasm</keyword>
<keyword id="KW-1185">Reference proteome</keyword>
<name>CH10_LATSS</name>
<organism>
    <name type="scientific">Latilactobacillus sakei subsp. sakei (strain 23K)</name>
    <name type="common">Lactobacillus sakei subsp. sakei</name>
    <dbReference type="NCBI Taxonomy" id="314315"/>
    <lineage>
        <taxon>Bacteria</taxon>
        <taxon>Bacillati</taxon>
        <taxon>Bacillota</taxon>
        <taxon>Bacilli</taxon>
        <taxon>Lactobacillales</taxon>
        <taxon>Lactobacillaceae</taxon>
        <taxon>Latilactobacillus</taxon>
    </lineage>
</organism>
<feature type="chain" id="PRO_1000025287" description="Co-chaperonin GroES">
    <location>
        <begin position="1"/>
        <end position="94"/>
    </location>
</feature>
<reference key="1">
    <citation type="journal article" date="2005" name="Nat. Biotechnol.">
        <title>The complete genome sequence of the meat-borne lactic acid bacterium Lactobacillus sakei 23K.</title>
        <authorList>
            <person name="Chaillou S."/>
            <person name="Champomier-Verges M.-C."/>
            <person name="Cornet M."/>
            <person name="Crutz-Le Coq A.-M."/>
            <person name="Dudez A.-M."/>
            <person name="Martin V."/>
            <person name="Beaufils S."/>
            <person name="Darbon-Rongere E."/>
            <person name="Bossy R."/>
            <person name="Loux V."/>
            <person name="Zagorec M."/>
        </authorList>
    </citation>
    <scope>NUCLEOTIDE SEQUENCE [LARGE SCALE GENOMIC DNA]</scope>
    <source>
        <strain>23K</strain>
    </source>
</reference>
<dbReference type="EMBL" id="CR936503">
    <property type="protein sequence ID" value="CAI54659.1"/>
    <property type="molecule type" value="Genomic_DNA"/>
</dbReference>
<dbReference type="RefSeq" id="WP_011374067.1">
    <property type="nucleotide sequence ID" value="NC_007576.1"/>
</dbReference>
<dbReference type="SMR" id="Q38YR8"/>
<dbReference type="STRING" id="314315.LCA_0358"/>
<dbReference type="GeneID" id="57133187"/>
<dbReference type="KEGG" id="lsa:LCA_0358"/>
<dbReference type="eggNOG" id="COG0234">
    <property type="taxonomic scope" value="Bacteria"/>
</dbReference>
<dbReference type="HOGENOM" id="CLU_132825_2_1_9"/>
<dbReference type="OrthoDB" id="9806791at2"/>
<dbReference type="Proteomes" id="UP000002707">
    <property type="component" value="Chromosome"/>
</dbReference>
<dbReference type="GO" id="GO:0005737">
    <property type="term" value="C:cytoplasm"/>
    <property type="evidence" value="ECO:0007669"/>
    <property type="project" value="UniProtKB-SubCell"/>
</dbReference>
<dbReference type="GO" id="GO:0005524">
    <property type="term" value="F:ATP binding"/>
    <property type="evidence" value="ECO:0007669"/>
    <property type="project" value="InterPro"/>
</dbReference>
<dbReference type="GO" id="GO:0046872">
    <property type="term" value="F:metal ion binding"/>
    <property type="evidence" value="ECO:0007669"/>
    <property type="project" value="TreeGrafter"/>
</dbReference>
<dbReference type="GO" id="GO:0044183">
    <property type="term" value="F:protein folding chaperone"/>
    <property type="evidence" value="ECO:0007669"/>
    <property type="project" value="InterPro"/>
</dbReference>
<dbReference type="GO" id="GO:0051087">
    <property type="term" value="F:protein-folding chaperone binding"/>
    <property type="evidence" value="ECO:0007669"/>
    <property type="project" value="TreeGrafter"/>
</dbReference>
<dbReference type="GO" id="GO:0051082">
    <property type="term" value="F:unfolded protein binding"/>
    <property type="evidence" value="ECO:0007669"/>
    <property type="project" value="TreeGrafter"/>
</dbReference>
<dbReference type="GO" id="GO:0051085">
    <property type="term" value="P:chaperone cofactor-dependent protein refolding"/>
    <property type="evidence" value="ECO:0007669"/>
    <property type="project" value="TreeGrafter"/>
</dbReference>
<dbReference type="CDD" id="cd00320">
    <property type="entry name" value="cpn10"/>
    <property type="match status" value="1"/>
</dbReference>
<dbReference type="FunFam" id="2.30.33.40:FF:000001">
    <property type="entry name" value="10 kDa chaperonin"/>
    <property type="match status" value="1"/>
</dbReference>
<dbReference type="Gene3D" id="2.30.33.40">
    <property type="entry name" value="GroES chaperonin"/>
    <property type="match status" value="1"/>
</dbReference>
<dbReference type="HAMAP" id="MF_00580">
    <property type="entry name" value="CH10"/>
    <property type="match status" value="1"/>
</dbReference>
<dbReference type="InterPro" id="IPR020818">
    <property type="entry name" value="Chaperonin_GroES"/>
</dbReference>
<dbReference type="InterPro" id="IPR037124">
    <property type="entry name" value="Chaperonin_GroES_sf"/>
</dbReference>
<dbReference type="InterPro" id="IPR011032">
    <property type="entry name" value="GroES-like_sf"/>
</dbReference>
<dbReference type="NCBIfam" id="NF001531">
    <property type="entry name" value="PRK00364.2-2"/>
    <property type="match status" value="1"/>
</dbReference>
<dbReference type="NCBIfam" id="NF001533">
    <property type="entry name" value="PRK00364.2-4"/>
    <property type="match status" value="1"/>
</dbReference>
<dbReference type="NCBIfam" id="NF001534">
    <property type="entry name" value="PRK00364.2-5"/>
    <property type="match status" value="1"/>
</dbReference>
<dbReference type="PANTHER" id="PTHR10772">
    <property type="entry name" value="10 KDA HEAT SHOCK PROTEIN"/>
    <property type="match status" value="1"/>
</dbReference>
<dbReference type="PANTHER" id="PTHR10772:SF58">
    <property type="entry name" value="CO-CHAPERONIN GROES"/>
    <property type="match status" value="1"/>
</dbReference>
<dbReference type="Pfam" id="PF00166">
    <property type="entry name" value="Cpn10"/>
    <property type="match status" value="1"/>
</dbReference>
<dbReference type="PRINTS" id="PR00297">
    <property type="entry name" value="CHAPERONIN10"/>
</dbReference>
<dbReference type="SMART" id="SM00883">
    <property type="entry name" value="Cpn10"/>
    <property type="match status" value="1"/>
</dbReference>
<dbReference type="SUPFAM" id="SSF50129">
    <property type="entry name" value="GroES-like"/>
    <property type="match status" value="1"/>
</dbReference>
<accession>Q38YR8</accession>
<protein>
    <recommendedName>
        <fullName evidence="1">Co-chaperonin GroES</fullName>
    </recommendedName>
    <alternativeName>
        <fullName evidence="1">10 kDa chaperonin</fullName>
    </alternativeName>
    <alternativeName>
        <fullName evidence="1">Chaperonin-10</fullName>
        <shortName evidence="1">Cpn10</shortName>
    </alternativeName>
</protein>
<sequence length="94" mass="10170">MLKPLEDRVVIAVKDEAEQTVGGIVIASNAKQKPQTGKVVAVGAGAMTSDGQRIPLDVKENDEVIYDKYAGSEVEYEGQQYLVLHAKDIIAIIE</sequence>